<organism>
    <name type="scientific">Oryza sativa subsp. japonica</name>
    <name type="common">Rice</name>
    <dbReference type="NCBI Taxonomy" id="39947"/>
    <lineage>
        <taxon>Eukaryota</taxon>
        <taxon>Viridiplantae</taxon>
        <taxon>Streptophyta</taxon>
        <taxon>Embryophyta</taxon>
        <taxon>Tracheophyta</taxon>
        <taxon>Spermatophyta</taxon>
        <taxon>Magnoliopsida</taxon>
        <taxon>Liliopsida</taxon>
        <taxon>Poales</taxon>
        <taxon>Poaceae</taxon>
        <taxon>BOP clade</taxon>
        <taxon>Oryzoideae</taxon>
        <taxon>Oryzeae</taxon>
        <taxon>Oryzinae</taxon>
        <taxon>Oryza</taxon>
        <taxon>Oryza sativa</taxon>
    </lineage>
</organism>
<name>GSH1B_ORYSJ</name>
<reference key="1">
    <citation type="journal article" date="2005" name="Nature">
        <title>The map-based sequence of the rice genome.</title>
        <authorList>
            <consortium name="International rice genome sequencing project (IRGSP)"/>
        </authorList>
    </citation>
    <scope>NUCLEOTIDE SEQUENCE [LARGE SCALE GENOMIC DNA]</scope>
    <source>
        <strain>cv. Nipponbare</strain>
    </source>
</reference>
<reference key="2">
    <citation type="journal article" date="2008" name="Nucleic Acids Res.">
        <title>The rice annotation project database (RAP-DB): 2008 update.</title>
        <authorList>
            <consortium name="The rice annotation project (RAP)"/>
        </authorList>
    </citation>
    <scope>GENOME REANNOTATION</scope>
    <source>
        <strain>cv. Nipponbare</strain>
    </source>
</reference>
<reference key="3">
    <citation type="journal article" date="2013" name="Rice">
        <title>Improvement of the Oryza sativa Nipponbare reference genome using next generation sequence and optical map data.</title>
        <authorList>
            <person name="Kawahara Y."/>
            <person name="de la Bastide M."/>
            <person name="Hamilton J.P."/>
            <person name="Kanamori H."/>
            <person name="McCombie W.R."/>
            <person name="Ouyang S."/>
            <person name="Schwartz D.C."/>
            <person name="Tanaka T."/>
            <person name="Wu J."/>
            <person name="Zhou S."/>
            <person name="Childs K.L."/>
            <person name="Davidson R.M."/>
            <person name="Lin H."/>
            <person name="Quesada-Ocampo L."/>
            <person name="Vaillancourt B."/>
            <person name="Sakai H."/>
            <person name="Lee S.S."/>
            <person name="Kim J."/>
            <person name="Numa H."/>
            <person name="Itoh T."/>
            <person name="Buell C.R."/>
            <person name="Matsumoto T."/>
        </authorList>
    </citation>
    <scope>GENOME REANNOTATION</scope>
    <source>
        <strain>cv. Nipponbare</strain>
    </source>
</reference>
<reference key="4">
    <citation type="journal article" date="2005" name="PLoS Biol.">
        <title>The genomes of Oryza sativa: a history of duplications.</title>
        <authorList>
            <person name="Yu J."/>
            <person name="Wang J."/>
            <person name="Lin W."/>
            <person name="Li S."/>
            <person name="Li H."/>
            <person name="Zhou J."/>
            <person name="Ni P."/>
            <person name="Dong W."/>
            <person name="Hu S."/>
            <person name="Zeng C."/>
            <person name="Zhang J."/>
            <person name="Zhang Y."/>
            <person name="Li R."/>
            <person name="Xu Z."/>
            <person name="Li S."/>
            <person name="Li X."/>
            <person name="Zheng H."/>
            <person name="Cong L."/>
            <person name="Lin L."/>
            <person name="Yin J."/>
            <person name="Geng J."/>
            <person name="Li G."/>
            <person name="Shi J."/>
            <person name="Liu J."/>
            <person name="Lv H."/>
            <person name="Li J."/>
            <person name="Wang J."/>
            <person name="Deng Y."/>
            <person name="Ran L."/>
            <person name="Shi X."/>
            <person name="Wang X."/>
            <person name="Wu Q."/>
            <person name="Li C."/>
            <person name="Ren X."/>
            <person name="Wang J."/>
            <person name="Wang X."/>
            <person name="Li D."/>
            <person name="Liu D."/>
            <person name="Zhang X."/>
            <person name="Ji Z."/>
            <person name="Zhao W."/>
            <person name="Sun Y."/>
            <person name="Zhang Z."/>
            <person name="Bao J."/>
            <person name="Han Y."/>
            <person name="Dong L."/>
            <person name="Ji J."/>
            <person name="Chen P."/>
            <person name="Wu S."/>
            <person name="Liu J."/>
            <person name="Xiao Y."/>
            <person name="Bu D."/>
            <person name="Tan J."/>
            <person name="Yang L."/>
            <person name="Ye C."/>
            <person name="Zhang J."/>
            <person name="Xu J."/>
            <person name="Zhou Y."/>
            <person name="Yu Y."/>
            <person name="Zhang B."/>
            <person name="Zhuang S."/>
            <person name="Wei H."/>
            <person name="Liu B."/>
            <person name="Lei M."/>
            <person name="Yu H."/>
            <person name="Li Y."/>
            <person name="Xu H."/>
            <person name="Wei S."/>
            <person name="He X."/>
            <person name="Fang L."/>
            <person name="Zhang Z."/>
            <person name="Zhang Y."/>
            <person name="Huang X."/>
            <person name="Su Z."/>
            <person name="Tong W."/>
            <person name="Li J."/>
            <person name="Tong Z."/>
            <person name="Li S."/>
            <person name="Ye J."/>
            <person name="Wang L."/>
            <person name="Fang L."/>
            <person name="Lei T."/>
            <person name="Chen C.-S."/>
            <person name="Chen H.-C."/>
            <person name="Xu Z."/>
            <person name="Li H."/>
            <person name="Huang H."/>
            <person name="Zhang F."/>
            <person name="Xu H."/>
            <person name="Li N."/>
            <person name="Zhao C."/>
            <person name="Li S."/>
            <person name="Dong L."/>
            <person name="Huang Y."/>
            <person name="Li L."/>
            <person name="Xi Y."/>
            <person name="Qi Q."/>
            <person name="Li W."/>
            <person name="Zhang B."/>
            <person name="Hu W."/>
            <person name="Zhang Y."/>
            <person name="Tian X."/>
            <person name="Jiao Y."/>
            <person name="Liang X."/>
            <person name="Jin J."/>
            <person name="Gao L."/>
            <person name="Zheng W."/>
            <person name="Hao B."/>
            <person name="Liu S.-M."/>
            <person name="Wang W."/>
            <person name="Yuan L."/>
            <person name="Cao M."/>
            <person name="McDermott J."/>
            <person name="Samudrala R."/>
            <person name="Wang J."/>
            <person name="Wong G.K.-S."/>
            <person name="Yang H."/>
        </authorList>
    </citation>
    <scope>NUCLEOTIDE SEQUENCE [LARGE SCALE GENOMIC DNA]</scope>
    <source>
        <strain>cv. Nipponbare</strain>
    </source>
</reference>
<comment type="catalytic activity">
    <reaction>
        <text>L-cysteine + L-glutamate + ATP = gamma-L-glutamyl-L-cysteine + ADP + phosphate + H(+)</text>
        <dbReference type="Rhea" id="RHEA:13285"/>
        <dbReference type="ChEBI" id="CHEBI:15378"/>
        <dbReference type="ChEBI" id="CHEBI:29985"/>
        <dbReference type="ChEBI" id="CHEBI:30616"/>
        <dbReference type="ChEBI" id="CHEBI:35235"/>
        <dbReference type="ChEBI" id="CHEBI:43474"/>
        <dbReference type="ChEBI" id="CHEBI:58173"/>
        <dbReference type="ChEBI" id="CHEBI:456216"/>
        <dbReference type="EC" id="6.3.2.2"/>
    </reaction>
</comment>
<comment type="pathway">
    <text>Sulfur metabolism; glutathione biosynthesis; glutathione from L-cysteine and L-glutamate: step 1/2.</text>
</comment>
<comment type="subunit">
    <text evidence="1">Homodimer or monomer when oxidized or reduced, respectively.</text>
</comment>
<comment type="subcellular location">
    <subcellularLocation>
        <location evidence="1">Plastid</location>
        <location evidence="1">Chloroplast</location>
    </subcellularLocation>
</comment>
<comment type="PTM">
    <text evidence="1">The Cys-160-Cys-380 disulfide bridge is known to modulate the enzyme activity according to the redox status. The oxidized form constitutes the active enzyme (By similarity).</text>
</comment>
<comment type="similarity">
    <text evidence="4">Belongs to the carboxylate-amine ligase family. Glutamate--cysteine ligase type 2 subfamily.</text>
</comment>
<comment type="sequence caution" evidence="4">
    <conflict type="erroneous gene model prediction">
        <sequence resource="EMBL-CDS" id="BAF21493"/>
    </conflict>
</comment>
<dbReference type="EC" id="6.3.2.2"/>
<dbReference type="EMBL" id="AP005256">
    <property type="protein sequence ID" value="BAC84166.1"/>
    <property type="molecule type" value="Genomic_DNA"/>
</dbReference>
<dbReference type="EMBL" id="AP008213">
    <property type="protein sequence ID" value="BAF21493.2"/>
    <property type="status" value="ALT_SEQ"/>
    <property type="molecule type" value="Genomic_DNA"/>
</dbReference>
<dbReference type="EMBL" id="AP014963">
    <property type="status" value="NOT_ANNOTATED_CDS"/>
    <property type="molecule type" value="Genomic_DNA"/>
</dbReference>
<dbReference type="EMBL" id="CM000144">
    <property type="status" value="NOT_ANNOTATED_CDS"/>
    <property type="molecule type" value="Genomic_DNA"/>
</dbReference>
<dbReference type="RefSeq" id="XP_015647910.1">
    <property type="nucleotide sequence ID" value="XM_015792424.1"/>
</dbReference>
<dbReference type="SMR" id="Q6Z3A3"/>
<dbReference type="FunCoup" id="Q6Z3A3">
    <property type="interactions" value="1285"/>
</dbReference>
<dbReference type="STRING" id="39947.Q6Z3A3"/>
<dbReference type="PaxDb" id="39947-Q6Z3A3"/>
<dbReference type="EnsemblPlants" id="Os07t0462000-01">
    <property type="protein sequence ID" value="Os07t0462000-01"/>
    <property type="gene ID" value="Os07g0462000"/>
</dbReference>
<dbReference type="Gramene" id="Os07t0462000-01">
    <property type="protein sequence ID" value="Os07t0462000-01"/>
    <property type="gene ID" value="Os07g0462000"/>
</dbReference>
<dbReference type="KEGG" id="dosa:Os07g0462000"/>
<dbReference type="InParanoid" id="Q6Z3A3"/>
<dbReference type="OrthoDB" id="2012853at2759"/>
<dbReference type="PlantReactome" id="R-OSA-1119342">
    <property type="pathway name" value="Gamma-glutamyl cycle"/>
</dbReference>
<dbReference type="PlantReactome" id="R-OSA-1119483">
    <property type="pathway name" value="Glutathione biosynthesis"/>
</dbReference>
<dbReference type="UniPathway" id="UPA00142">
    <property type="reaction ID" value="UER00209"/>
</dbReference>
<dbReference type="Proteomes" id="UP000000763">
    <property type="component" value="Chromosome 7"/>
</dbReference>
<dbReference type="Proteomes" id="UP000007752">
    <property type="component" value="Chromosome 7"/>
</dbReference>
<dbReference type="Proteomes" id="UP000059680">
    <property type="component" value="Chromosome 7"/>
</dbReference>
<dbReference type="GO" id="GO:0009507">
    <property type="term" value="C:chloroplast"/>
    <property type="evidence" value="ECO:0007669"/>
    <property type="project" value="UniProtKB-SubCell"/>
</dbReference>
<dbReference type="GO" id="GO:0005524">
    <property type="term" value="F:ATP binding"/>
    <property type="evidence" value="ECO:0007669"/>
    <property type="project" value="UniProtKB-KW"/>
</dbReference>
<dbReference type="GO" id="GO:0004357">
    <property type="term" value="F:glutamate-cysteine ligase activity"/>
    <property type="evidence" value="ECO:0007669"/>
    <property type="project" value="UniProtKB-EC"/>
</dbReference>
<dbReference type="GO" id="GO:0006750">
    <property type="term" value="P:glutathione biosynthetic process"/>
    <property type="evidence" value="ECO:0007669"/>
    <property type="project" value="UniProtKB-UniPathway"/>
</dbReference>
<dbReference type="FunFam" id="3.30.590.20:FF:000003">
    <property type="entry name" value="Glutamate--cysteine ligase"/>
    <property type="match status" value="1"/>
</dbReference>
<dbReference type="Gene3D" id="3.30.590.20">
    <property type="match status" value="1"/>
</dbReference>
<dbReference type="InterPro" id="IPR035434">
    <property type="entry name" value="GCL_bact_plant"/>
</dbReference>
<dbReference type="InterPro" id="IPR006336">
    <property type="entry name" value="GCS2"/>
</dbReference>
<dbReference type="InterPro" id="IPR014746">
    <property type="entry name" value="Gln_synth/guanido_kin_cat_dom"/>
</dbReference>
<dbReference type="InterPro" id="IPR011556">
    <property type="entry name" value="Glut_cys_lig_pln_type"/>
</dbReference>
<dbReference type="NCBIfam" id="TIGR01436">
    <property type="entry name" value="glu_cys_lig_pln"/>
    <property type="match status" value="1"/>
</dbReference>
<dbReference type="PANTHER" id="PTHR34378">
    <property type="entry name" value="GLUTAMATE--CYSTEINE LIGASE, CHLOROPLASTIC"/>
    <property type="match status" value="1"/>
</dbReference>
<dbReference type="PANTHER" id="PTHR34378:SF1">
    <property type="entry name" value="GLUTAMATE--CYSTEINE LIGASE, CHLOROPLASTIC"/>
    <property type="match status" value="1"/>
</dbReference>
<dbReference type="Pfam" id="PF04107">
    <property type="entry name" value="GCS2"/>
    <property type="match status" value="1"/>
</dbReference>
<dbReference type="PIRSF" id="PIRSF017901">
    <property type="entry name" value="GCL"/>
    <property type="match status" value="1"/>
</dbReference>
<dbReference type="SUPFAM" id="SSF55931">
    <property type="entry name" value="Glutamine synthetase/guanido kinase"/>
    <property type="match status" value="1"/>
</dbReference>
<proteinExistence type="inferred from homology"/>
<feature type="transit peptide" description="Chloroplast" evidence="2">
    <location>
        <begin position="1"/>
        <end position="34"/>
    </location>
</feature>
<feature type="chain" id="PRO_0000333024" description="Glutamate--cysteine ligase B, chloroplastic">
    <location>
        <begin position="35"/>
        <end position="496"/>
    </location>
</feature>
<feature type="region of interest" description="Disordered" evidence="3">
    <location>
        <begin position="14"/>
        <end position="53"/>
    </location>
</feature>
<feature type="compositionally biased region" description="Low complexity" evidence="3">
    <location>
        <begin position="29"/>
        <end position="38"/>
    </location>
</feature>
<feature type="disulfide bond" evidence="1">
    <location>
        <begin position="160"/>
        <end position="380"/>
    </location>
</feature>
<feature type="sequence conflict" description="In Ref. 4; CM000144." evidence="4" ref="4">
    <original>L</original>
    <variation>F</variation>
    <location>
        <position position="63"/>
    </location>
</feature>
<keyword id="KW-0067">ATP-binding</keyword>
<keyword id="KW-0150">Chloroplast</keyword>
<keyword id="KW-1015">Disulfide bond</keyword>
<keyword id="KW-0317">Glutathione biosynthesis</keyword>
<keyword id="KW-0436">Ligase</keyword>
<keyword id="KW-0547">Nucleotide-binding</keyword>
<keyword id="KW-0934">Plastid</keyword>
<keyword id="KW-1185">Reference proteome</keyword>
<keyword id="KW-0809">Transit peptide</keyword>
<protein>
    <recommendedName>
        <fullName>Glutamate--cysteine ligase B, chloroplastic</fullName>
        <ecNumber>6.3.2.2</ecNumber>
    </recommendedName>
    <alternativeName>
        <fullName>Gamma-ECS B</fullName>
        <shortName>GCS B</shortName>
    </alternativeName>
    <alternativeName>
        <fullName>Gamma-glutamylcysteine synthetase B</fullName>
    </alternativeName>
</protein>
<gene>
    <name type="primary">GSH1-2</name>
    <name type="ordered locus">Os07g0462000</name>
    <name type="ordered locus">LOC_Os07g27790</name>
    <name type="ORF">P0038F09.39</name>
</gene>
<evidence type="ECO:0000250" key="1"/>
<evidence type="ECO:0000255" key="2"/>
<evidence type="ECO:0000256" key="3">
    <source>
        <dbReference type="SAM" id="MobiDB-lite"/>
    </source>
</evidence>
<evidence type="ECO:0000305" key="4"/>
<sequence length="496" mass="56153">MAVASRLAVARVAPDGGAAGRRRRRRGRPVVAVPTAAGRGRGRGGAVAASPPTEEAVQMTEPLTKEDLMAYLVSGCKPKENWRIGTEHEKFGFEVDTLRPIKYDQIRDILNGLAERFDWDKIVEENNVIGLKQGKQSISLEPGGQFELSGAPLETLHQTCAEVNSHLYQVKAVGEEMGIGFLGIGFQPKWALSDIPIMPKGRYEIMRNYMPKVGSLGLDMMFRTCTVQVNLDFSSEQDMIRKFRTGLALQPIATAIFANSPFKEGKPNGYLSLRSHIWTDTDNNRSGMLPFVFDDSFGFERYVDYALDVPMYFVYRNKKYIDCTGMSFRDFMVGKLPQAPGELPTLNDWENHLTTIFPEVRLKRYLEMRGADGGPWRRLCALPAFWVGLLYDEESLQSISDMTSDWTNEEREMLRRKVPVTGLKTPFRDGYVRDLAEEILQLSKNGLERRGYKEVGFLREVDAVISSGVTPAERLLNLYETKWQRSVDPVFQELLY</sequence>
<accession>Q6Z3A3</accession>
<accession>A3BJG6</accession>
<accession>Q0D6N0</accession>